<dbReference type="EC" id="2.7.1.33" evidence="1"/>
<dbReference type="EMBL" id="CP000096">
    <property type="protein sequence ID" value="ABB24267.1"/>
    <property type="molecule type" value="Genomic_DNA"/>
</dbReference>
<dbReference type="RefSeq" id="WP_011358139.1">
    <property type="nucleotide sequence ID" value="NC_007512.1"/>
</dbReference>
<dbReference type="SMR" id="Q3B314"/>
<dbReference type="STRING" id="319225.Plut_1408"/>
<dbReference type="KEGG" id="plt:Plut_1408"/>
<dbReference type="eggNOG" id="COG1521">
    <property type="taxonomic scope" value="Bacteria"/>
</dbReference>
<dbReference type="HOGENOM" id="CLU_066627_1_0_10"/>
<dbReference type="OrthoDB" id="9804707at2"/>
<dbReference type="UniPathway" id="UPA00241">
    <property type="reaction ID" value="UER00352"/>
</dbReference>
<dbReference type="Proteomes" id="UP000002709">
    <property type="component" value="Chromosome"/>
</dbReference>
<dbReference type="GO" id="GO:0005737">
    <property type="term" value="C:cytoplasm"/>
    <property type="evidence" value="ECO:0007669"/>
    <property type="project" value="UniProtKB-SubCell"/>
</dbReference>
<dbReference type="GO" id="GO:0005524">
    <property type="term" value="F:ATP binding"/>
    <property type="evidence" value="ECO:0007669"/>
    <property type="project" value="UniProtKB-UniRule"/>
</dbReference>
<dbReference type="GO" id="GO:0046872">
    <property type="term" value="F:metal ion binding"/>
    <property type="evidence" value="ECO:0007669"/>
    <property type="project" value="UniProtKB-KW"/>
</dbReference>
<dbReference type="GO" id="GO:0004594">
    <property type="term" value="F:pantothenate kinase activity"/>
    <property type="evidence" value="ECO:0007669"/>
    <property type="project" value="UniProtKB-UniRule"/>
</dbReference>
<dbReference type="GO" id="GO:0015937">
    <property type="term" value="P:coenzyme A biosynthetic process"/>
    <property type="evidence" value="ECO:0007669"/>
    <property type="project" value="UniProtKB-UniRule"/>
</dbReference>
<dbReference type="CDD" id="cd24015">
    <property type="entry name" value="ASKHA_NBD_PanK-III"/>
    <property type="match status" value="1"/>
</dbReference>
<dbReference type="Gene3D" id="3.30.420.40">
    <property type="match status" value="2"/>
</dbReference>
<dbReference type="HAMAP" id="MF_01274">
    <property type="entry name" value="Pantothen_kinase_3"/>
    <property type="match status" value="1"/>
</dbReference>
<dbReference type="InterPro" id="IPR043129">
    <property type="entry name" value="ATPase_NBD"/>
</dbReference>
<dbReference type="InterPro" id="IPR004619">
    <property type="entry name" value="Type_III_PanK"/>
</dbReference>
<dbReference type="NCBIfam" id="TIGR00671">
    <property type="entry name" value="baf"/>
    <property type="match status" value="1"/>
</dbReference>
<dbReference type="NCBIfam" id="NF009849">
    <property type="entry name" value="PRK13320.1-1"/>
    <property type="match status" value="1"/>
</dbReference>
<dbReference type="PANTHER" id="PTHR34265">
    <property type="entry name" value="TYPE III PANTOTHENATE KINASE"/>
    <property type="match status" value="1"/>
</dbReference>
<dbReference type="PANTHER" id="PTHR34265:SF1">
    <property type="entry name" value="TYPE III PANTOTHENATE KINASE"/>
    <property type="match status" value="1"/>
</dbReference>
<dbReference type="Pfam" id="PF03309">
    <property type="entry name" value="Pan_kinase"/>
    <property type="match status" value="1"/>
</dbReference>
<dbReference type="SUPFAM" id="SSF53067">
    <property type="entry name" value="Actin-like ATPase domain"/>
    <property type="match status" value="2"/>
</dbReference>
<evidence type="ECO:0000255" key="1">
    <source>
        <dbReference type="HAMAP-Rule" id="MF_01274"/>
    </source>
</evidence>
<name>COAX_CHLL3</name>
<organism>
    <name type="scientific">Chlorobium luteolum (strain DSM 273 / BCRC 81028 / 2530)</name>
    <name type="common">Pelodictyon luteolum</name>
    <dbReference type="NCBI Taxonomy" id="319225"/>
    <lineage>
        <taxon>Bacteria</taxon>
        <taxon>Pseudomonadati</taxon>
        <taxon>Chlorobiota</taxon>
        <taxon>Chlorobiia</taxon>
        <taxon>Chlorobiales</taxon>
        <taxon>Chlorobiaceae</taxon>
        <taxon>Chlorobium/Pelodictyon group</taxon>
        <taxon>Pelodictyon</taxon>
    </lineage>
</organism>
<sequence length="270" mass="28794">MEQMAHPSSTPLLVAEIGNTTAMFAVFSGTDPIDSLQVATAALSSPEAVGELLQPLLARHSLAADAVISSVVPRAGEAAGRWLLDILPGRVLAVDSTLNLPFRISYDPPSALGADRLSLCARCCMLEEEAAVIALDIGTAITFDVLSADRSYLGGLIMPGLELMASALHERTAQLPRVEVSRPERLMGLSTADCIRSGVVWGCVLQVEGLVRKIRGWLRSEHGEGYARVVATGGRAPLIVSMMEMPPLLDPHAVSRGARYLFELNRITVS</sequence>
<keyword id="KW-0067">ATP-binding</keyword>
<keyword id="KW-0173">Coenzyme A biosynthesis</keyword>
<keyword id="KW-0963">Cytoplasm</keyword>
<keyword id="KW-0418">Kinase</keyword>
<keyword id="KW-0479">Metal-binding</keyword>
<keyword id="KW-0547">Nucleotide-binding</keyword>
<keyword id="KW-0630">Potassium</keyword>
<keyword id="KW-1185">Reference proteome</keyword>
<keyword id="KW-0808">Transferase</keyword>
<comment type="function">
    <text evidence="1">Catalyzes the phosphorylation of pantothenate (Pan), the first step in CoA biosynthesis.</text>
</comment>
<comment type="catalytic activity">
    <reaction evidence="1">
        <text>(R)-pantothenate + ATP = (R)-4'-phosphopantothenate + ADP + H(+)</text>
        <dbReference type="Rhea" id="RHEA:16373"/>
        <dbReference type="ChEBI" id="CHEBI:10986"/>
        <dbReference type="ChEBI" id="CHEBI:15378"/>
        <dbReference type="ChEBI" id="CHEBI:29032"/>
        <dbReference type="ChEBI" id="CHEBI:30616"/>
        <dbReference type="ChEBI" id="CHEBI:456216"/>
        <dbReference type="EC" id="2.7.1.33"/>
    </reaction>
</comment>
<comment type="cofactor">
    <cofactor evidence="1">
        <name>NH4(+)</name>
        <dbReference type="ChEBI" id="CHEBI:28938"/>
    </cofactor>
    <cofactor evidence="1">
        <name>K(+)</name>
        <dbReference type="ChEBI" id="CHEBI:29103"/>
    </cofactor>
    <text evidence="1">A monovalent cation. Ammonium or potassium.</text>
</comment>
<comment type="pathway">
    <text evidence="1">Cofactor biosynthesis; coenzyme A biosynthesis; CoA from (R)-pantothenate: step 1/5.</text>
</comment>
<comment type="subunit">
    <text evidence="1">Homodimer.</text>
</comment>
<comment type="subcellular location">
    <subcellularLocation>
        <location evidence="1">Cytoplasm</location>
    </subcellularLocation>
</comment>
<comment type="similarity">
    <text evidence="1">Belongs to the type III pantothenate kinase family.</text>
</comment>
<accession>Q3B314</accession>
<gene>
    <name evidence="1" type="primary">coaX</name>
    <name type="ordered locus">Plut_1408</name>
</gene>
<feature type="chain" id="PRO_0000267574" description="Type III pantothenate kinase">
    <location>
        <begin position="1"/>
        <end position="270"/>
    </location>
</feature>
<feature type="active site" description="Proton acceptor" evidence="1">
    <location>
        <position position="115"/>
    </location>
</feature>
<feature type="binding site" evidence="1">
    <location>
        <begin position="16"/>
        <end position="23"/>
    </location>
    <ligand>
        <name>ATP</name>
        <dbReference type="ChEBI" id="CHEBI:30616"/>
    </ligand>
</feature>
<feature type="binding site" evidence="1">
    <location>
        <position position="106"/>
    </location>
    <ligand>
        <name>substrate</name>
    </ligand>
</feature>
<feature type="binding site" evidence="1">
    <location>
        <begin position="113"/>
        <end position="116"/>
    </location>
    <ligand>
        <name>substrate</name>
    </ligand>
</feature>
<feature type="binding site" evidence="1">
    <location>
        <position position="136"/>
    </location>
    <ligand>
        <name>K(+)</name>
        <dbReference type="ChEBI" id="CHEBI:29103"/>
    </ligand>
</feature>
<feature type="binding site" evidence="1">
    <location>
        <position position="139"/>
    </location>
    <ligand>
        <name>ATP</name>
        <dbReference type="ChEBI" id="CHEBI:30616"/>
    </ligand>
</feature>
<feature type="binding site" evidence="1">
    <location>
        <position position="191"/>
    </location>
    <ligand>
        <name>substrate</name>
    </ligand>
</feature>
<proteinExistence type="inferred from homology"/>
<protein>
    <recommendedName>
        <fullName evidence="1">Type III pantothenate kinase</fullName>
        <ecNumber evidence="1">2.7.1.33</ecNumber>
    </recommendedName>
    <alternativeName>
        <fullName evidence="1">PanK-III</fullName>
    </alternativeName>
    <alternativeName>
        <fullName evidence="1">Pantothenic acid kinase</fullName>
    </alternativeName>
</protein>
<reference key="1">
    <citation type="submission" date="2005-08" db="EMBL/GenBank/DDBJ databases">
        <title>Complete sequence of Pelodictyon luteolum DSM 273.</title>
        <authorList>
            <consortium name="US DOE Joint Genome Institute"/>
            <person name="Copeland A."/>
            <person name="Lucas S."/>
            <person name="Lapidus A."/>
            <person name="Barry K."/>
            <person name="Detter J.C."/>
            <person name="Glavina T."/>
            <person name="Hammon N."/>
            <person name="Israni S."/>
            <person name="Pitluck S."/>
            <person name="Bryant D."/>
            <person name="Schmutz J."/>
            <person name="Larimer F."/>
            <person name="Land M."/>
            <person name="Kyrpides N."/>
            <person name="Ivanova N."/>
            <person name="Richardson P."/>
        </authorList>
    </citation>
    <scope>NUCLEOTIDE SEQUENCE [LARGE SCALE GENOMIC DNA]</scope>
    <source>
        <strain>DSM 273 / BCRC 81028 / 2530</strain>
    </source>
</reference>